<feature type="chain" id="PRO_1000135264" description="ATP phosphoribosyltransferase">
    <location>
        <begin position="1"/>
        <end position="221"/>
    </location>
</feature>
<evidence type="ECO:0000255" key="1">
    <source>
        <dbReference type="HAMAP-Rule" id="MF_01018"/>
    </source>
</evidence>
<proteinExistence type="inferred from homology"/>
<sequence>MPGTSELITVAVPKGRLLQESSALFERALGVSPRKLLEGTRKLAADAPEAGLRFISIRAGDVASYVEHGAAEVGIVGLDVLREEPRDLYEPLDLGIGRCTVIVARPKGARPLPRGVAPRVATKYLSLAARHFAAKGVPAEIIPLHGSIEVAPSLGLADTIVDITETGETLRANGLVIEEKVLEVSARLVVNRVALKLHPERLRRLIEALRAAVAAAGAEAR</sequence>
<organism>
    <name type="scientific">Anaeromyxobacter sp. (strain K)</name>
    <dbReference type="NCBI Taxonomy" id="447217"/>
    <lineage>
        <taxon>Bacteria</taxon>
        <taxon>Pseudomonadati</taxon>
        <taxon>Myxococcota</taxon>
        <taxon>Myxococcia</taxon>
        <taxon>Myxococcales</taxon>
        <taxon>Cystobacterineae</taxon>
        <taxon>Anaeromyxobacteraceae</taxon>
        <taxon>Anaeromyxobacter</taxon>
    </lineage>
</organism>
<accession>B4UAY5</accession>
<reference key="1">
    <citation type="submission" date="2008-08" db="EMBL/GenBank/DDBJ databases">
        <title>Complete sequence of Anaeromyxobacter sp. K.</title>
        <authorList>
            <consortium name="US DOE Joint Genome Institute"/>
            <person name="Lucas S."/>
            <person name="Copeland A."/>
            <person name="Lapidus A."/>
            <person name="Glavina del Rio T."/>
            <person name="Dalin E."/>
            <person name="Tice H."/>
            <person name="Bruce D."/>
            <person name="Goodwin L."/>
            <person name="Pitluck S."/>
            <person name="Saunders E."/>
            <person name="Brettin T."/>
            <person name="Detter J.C."/>
            <person name="Han C."/>
            <person name="Larimer F."/>
            <person name="Land M."/>
            <person name="Hauser L."/>
            <person name="Kyrpides N."/>
            <person name="Ovchinnikiva G."/>
            <person name="Beliaev A."/>
        </authorList>
    </citation>
    <scope>NUCLEOTIDE SEQUENCE [LARGE SCALE GENOMIC DNA]</scope>
    <source>
        <strain>K</strain>
    </source>
</reference>
<name>HIS1_ANASK</name>
<keyword id="KW-0028">Amino-acid biosynthesis</keyword>
<keyword id="KW-0067">ATP-binding</keyword>
<keyword id="KW-0963">Cytoplasm</keyword>
<keyword id="KW-0328">Glycosyltransferase</keyword>
<keyword id="KW-0368">Histidine biosynthesis</keyword>
<keyword id="KW-0547">Nucleotide-binding</keyword>
<keyword id="KW-0808">Transferase</keyword>
<gene>
    <name evidence="1" type="primary">hisG</name>
    <name type="ordered locus">AnaeK_0391</name>
</gene>
<protein>
    <recommendedName>
        <fullName evidence="1">ATP phosphoribosyltransferase</fullName>
        <shortName evidence="1">ATP-PRT</shortName>
        <shortName evidence="1">ATP-PRTase</shortName>
        <ecNumber evidence="1">2.4.2.17</ecNumber>
    </recommendedName>
</protein>
<comment type="function">
    <text evidence="1">Catalyzes the condensation of ATP and 5-phosphoribose 1-diphosphate to form N'-(5'-phosphoribosyl)-ATP (PR-ATP). Has a crucial role in the pathway because the rate of histidine biosynthesis seems to be controlled primarily by regulation of HisG enzymatic activity.</text>
</comment>
<comment type="catalytic activity">
    <reaction evidence="1">
        <text>1-(5-phospho-beta-D-ribosyl)-ATP + diphosphate = 5-phospho-alpha-D-ribose 1-diphosphate + ATP</text>
        <dbReference type="Rhea" id="RHEA:18473"/>
        <dbReference type="ChEBI" id="CHEBI:30616"/>
        <dbReference type="ChEBI" id="CHEBI:33019"/>
        <dbReference type="ChEBI" id="CHEBI:58017"/>
        <dbReference type="ChEBI" id="CHEBI:73183"/>
        <dbReference type="EC" id="2.4.2.17"/>
    </reaction>
</comment>
<comment type="pathway">
    <text evidence="1">Amino-acid biosynthesis; L-histidine biosynthesis; L-histidine from 5-phospho-alpha-D-ribose 1-diphosphate: step 1/9.</text>
</comment>
<comment type="subunit">
    <text evidence="1">Heteromultimer composed of HisG and HisZ subunits.</text>
</comment>
<comment type="subcellular location">
    <subcellularLocation>
        <location evidence="1">Cytoplasm</location>
    </subcellularLocation>
</comment>
<comment type="domain">
    <text>Lacks the C-terminal regulatory region which is replaced by HisZ.</text>
</comment>
<comment type="similarity">
    <text evidence="1">Belongs to the ATP phosphoribosyltransferase family. Short subfamily.</text>
</comment>
<dbReference type="EC" id="2.4.2.17" evidence="1"/>
<dbReference type="EMBL" id="CP001131">
    <property type="protein sequence ID" value="ACG71633.1"/>
    <property type="molecule type" value="Genomic_DNA"/>
</dbReference>
<dbReference type="RefSeq" id="WP_012524466.1">
    <property type="nucleotide sequence ID" value="NC_011145.1"/>
</dbReference>
<dbReference type="SMR" id="B4UAY5"/>
<dbReference type="KEGG" id="ank:AnaeK_0391"/>
<dbReference type="HOGENOM" id="CLU_038115_2_0_7"/>
<dbReference type="OrthoDB" id="9801867at2"/>
<dbReference type="UniPathway" id="UPA00031">
    <property type="reaction ID" value="UER00006"/>
</dbReference>
<dbReference type="Proteomes" id="UP000001871">
    <property type="component" value="Chromosome"/>
</dbReference>
<dbReference type="GO" id="GO:0005737">
    <property type="term" value="C:cytoplasm"/>
    <property type="evidence" value="ECO:0007669"/>
    <property type="project" value="UniProtKB-SubCell"/>
</dbReference>
<dbReference type="GO" id="GO:0005524">
    <property type="term" value="F:ATP binding"/>
    <property type="evidence" value="ECO:0007669"/>
    <property type="project" value="UniProtKB-KW"/>
</dbReference>
<dbReference type="GO" id="GO:0003879">
    <property type="term" value="F:ATP phosphoribosyltransferase activity"/>
    <property type="evidence" value="ECO:0007669"/>
    <property type="project" value="UniProtKB-UniRule"/>
</dbReference>
<dbReference type="GO" id="GO:0000105">
    <property type="term" value="P:L-histidine biosynthetic process"/>
    <property type="evidence" value="ECO:0007669"/>
    <property type="project" value="UniProtKB-UniRule"/>
</dbReference>
<dbReference type="CDD" id="cd13595">
    <property type="entry name" value="PBP2_HisGs"/>
    <property type="match status" value="1"/>
</dbReference>
<dbReference type="Gene3D" id="3.40.190.10">
    <property type="entry name" value="Periplasmic binding protein-like II"/>
    <property type="match status" value="2"/>
</dbReference>
<dbReference type="HAMAP" id="MF_01018">
    <property type="entry name" value="HisG_Short"/>
    <property type="match status" value="1"/>
</dbReference>
<dbReference type="InterPro" id="IPR013820">
    <property type="entry name" value="ATP_PRibTrfase_cat"/>
</dbReference>
<dbReference type="InterPro" id="IPR018198">
    <property type="entry name" value="ATP_PRibTrfase_CS"/>
</dbReference>
<dbReference type="InterPro" id="IPR001348">
    <property type="entry name" value="ATP_PRibTrfase_HisG"/>
</dbReference>
<dbReference type="InterPro" id="IPR024893">
    <property type="entry name" value="ATP_PRibTrfase_HisG_short"/>
</dbReference>
<dbReference type="NCBIfam" id="TIGR00070">
    <property type="entry name" value="hisG"/>
    <property type="match status" value="1"/>
</dbReference>
<dbReference type="PANTHER" id="PTHR21403:SF8">
    <property type="entry name" value="ATP PHOSPHORIBOSYLTRANSFERASE"/>
    <property type="match status" value="1"/>
</dbReference>
<dbReference type="PANTHER" id="PTHR21403">
    <property type="entry name" value="ATP PHOSPHORIBOSYLTRANSFERASE ATP-PRTASE"/>
    <property type="match status" value="1"/>
</dbReference>
<dbReference type="Pfam" id="PF01634">
    <property type="entry name" value="HisG"/>
    <property type="match status" value="1"/>
</dbReference>
<dbReference type="SUPFAM" id="SSF53850">
    <property type="entry name" value="Periplasmic binding protein-like II"/>
    <property type="match status" value="1"/>
</dbReference>
<dbReference type="PROSITE" id="PS01316">
    <property type="entry name" value="ATP_P_PHORIBOSYLTR"/>
    <property type="match status" value="1"/>
</dbReference>